<proteinExistence type="inferred from homology"/>
<name>PRLF_ECOL6</name>
<comment type="function">
    <text evidence="1">Antitoxin component of a type II toxin-antitoxin (TA) system. Labile antitoxin that binds to the YhaV toxin and neutralizes its ribonuclease activity. Also acts as a transcription factor. The YhaV/PrlF complex binds the prlF-yhaV operon, probably negatively regulating its expression (By similarity).</text>
</comment>
<comment type="subunit">
    <text evidence="1">Homodimer; forms a complex with YhaV with stoichiometry PrlF(2)-YhaV(4), possibly as a YhaV(2)-PrlF(2)-YhaV(2) complex like the MazFE complex.</text>
</comment>
<comment type="subcellular location">
    <subcellularLocation>
        <location evidence="1">Cytoplasm</location>
    </subcellularLocation>
</comment>
<comment type="disruption phenotype">
    <text evidence="3">Deletion of the prlF-yhaV operon has no effect on virulence in mouse infection; the disrupted strain is as virulent as wild-type.</text>
</comment>
<organism>
    <name type="scientific">Escherichia coli O6:H1 (strain CFT073 / ATCC 700928 / UPEC)</name>
    <dbReference type="NCBI Taxonomy" id="199310"/>
    <lineage>
        <taxon>Bacteria</taxon>
        <taxon>Pseudomonadati</taxon>
        <taxon>Pseudomonadota</taxon>
        <taxon>Gammaproteobacteria</taxon>
        <taxon>Enterobacterales</taxon>
        <taxon>Enterobacteriaceae</taxon>
        <taxon>Escherichia</taxon>
    </lineage>
</organism>
<sequence>MPANARSNAVLTTESKVTIRGQTTIPAPVREALKLKPGLDSIHYEILPGGQVFMCRLGDEQEDHTMNAFLRFLDADIQNNPQKTRPFDIQQGKKLVAGMDVNIDDEIGDDE</sequence>
<protein>
    <recommendedName>
        <fullName>Antitoxin PrlF</fullName>
    </recommendedName>
</protein>
<reference key="1">
    <citation type="journal article" date="2002" name="Proc. Natl. Acad. Sci. U.S.A.">
        <title>Extensive mosaic structure revealed by the complete genome sequence of uropathogenic Escherichia coli.</title>
        <authorList>
            <person name="Welch R.A."/>
            <person name="Burland V."/>
            <person name="Plunkett G. III"/>
            <person name="Redford P."/>
            <person name="Roesch P."/>
            <person name="Rasko D."/>
            <person name="Buckles E.L."/>
            <person name="Liou S.-R."/>
            <person name="Boutin A."/>
            <person name="Hackett J."/>
            <person name="Stroud D."/>
            <person name="Mayhew G.F."/>
            <person name="Rose D.J."/>
            <person name="Zhou S."/>
            <person name="Schwartz D.C."/>
            <person name="Perna N.T."/>
            <person name="Mobley H.L.T."/>
            <person name="Donnenberg M.S."/>
            <person name="Blattner F.R."/>
        </authorList>
    </citation>
    <scope>NUCLEOTIDE SEQUENCE [LARGE SCALE GENOMIC DNA]</scope>
    <source>
        <strain>CFT073 / ATCC 700928 / UPEC</strain>
    </source>
</reference>
<reference key="2">
    <citation type="journal article" date="2012" name="PLoS Pathog.">
        <title>Toxin-antitoxin systems are important for niche-specific colonization and stress resistance of uropathogenic Escherichia coli.</title>
        <authorList>
            <person name="Norton J.P."/>
            <person name="Mulvey M.A."/>
        </authorList>
    </citation>
    <scope>DISRUPTION PHENOTYPE</scope>
    <source>
        <strain>CFT073 / ATCC 700928 / UPEC</strain>
    </source>
</reference>
<feature type="chain" id="PRO_0000420798" description="Antitoxin PrlF">
    <location>
        <begin position="1"/>
        <end position="111"/>
    </location>
</feature>
<feature type="domain" description="SpoVT-AbrB" evidence="2">
    <location>
        <begin position="12"/>
        <end position="59"/>
    </location>
</feature>
<accession>Q8FDB5</accession>
<keyword id="KW-0963">Cytoplasm</keyword>
<keyword id="KW-0238">DNA-binding</keyword>
<keyword id="KW-1185">Reference proteome</keyword>
<keyword id="KW-0678">Repressor</keyword>
<keyword id="KW-1277">Toxin-antitoxin system</keyword>
<keyword id="KW-0804">Transcription</keyword>
<keyword id="KW-0805">Transcription regulation</keyword>
<gene>
    <name type="primary">prlF</name>
    <name type="synonym">sohA</name>
    <name type="ordered locus">c3884</name>
</gene>
<evidence type="ECO:0000250" key="1"/>
<evidence type="ECO:0000255" key="2">
    <source>
        <dbReference type="PROSITE-ProRule" id="PRU01076"/>
    </source>
</evidence>
<evidence type="ECO:0000269" key="3">
    <source>
    </source>
</evidence>
<dbReference type="EMBL" id="AE014075">
    <property type="protein sequence ID" value="AAN82325.1"/>
    <property type="molecule type" value="Genomic_DNA"/>
</dbReference>
<dbReference type="RefSeq" id="WP_001296435.1">
    <property type="nucleotide sequence ID" value="NZ_CP051263.1"/>
</dbReference>
<dbReference type="STRING" id="199310.c3884"/>
<dbReference type="GeneID" id="89517974"/>
<dbReference type="KEGG" id="ecc:c3884"/>
<dbReference type="eggNOG" id="COG2002">
    <property type="taxonomic scope" value="Bacteria"/>
</dbReference>
<dbReference type="HOGENOM" id="CLU_143957_0_0_6"/>
<dbReference type="BioCyc" id="ECOL199310:C3884-MONOMER"/>
<dbReference type="Proteomes" id="UP000001410">
    <property type="component" value="Chromosome"/>
</dbReference>
<dbReference type="GO" id="GO:0005737">
    <property type="term" value="C:cytoplasm"/>
    <property type="evidence" value="ECO:0007669"/>
    <property type="project" value="UniProtKB-SubCell"/>
</dbReference>
<dbReference type="GO" id="GO:0003677">
    <property type="term" value="F:DNA binding"/>
    <property type="evidence" value="ECO:0007669"/>
    <property type="project" value="UniProtKB-KW"/>
</dbReference>
<dbReference type="GO" id="GO:0003700">
    <property type="term" value="F:DNA-binding transcription factor activity"/>
    <property type="evidence" value="ECO:0007669"/>
    <property type="project" value="InterPro"/>
</dbReference>
<dbReference type="GO" id="GO:0097351">
    <property type="term" value="F:toxin sequestering activity"/>
    <property type="evidence" value="ECO:0007669"/>
    <property type="project" value="InterPro"/>
</dbReference>
<dbReference type="GO" id="GO:0001558">
    <property type="term" value="P:regulation of cell growth"/>
    <property type="evidence" value="ECO:0007669"/>
    <property type="project" value="InterPro"/>
</dbReference>
<dbReference type="Gene3D" id="2.10.260.10">
    <property type="match status" value="1"/>
</dbReference>
<dbReference type="InterPro" id="IPR031848">
    <property type="entry name" value="PrlF_antitoxin"/>
</dbReference>
<dbReference type="InterPro" id="IPR007159">
    <property type="entry name" value="SpoVT-AbrB_dom"/>
</dbReference>
<dbReference type="InterPro" id="IPR037914">
    <property type="entry name" value="SpoVT-AbrB_sf"/>
</dbReference>
<dbReference type="NCBIfam" id="NF007429">
    <property type="entry name" value="PRK09974.1"/>
    <property type="match status" value="1"/>
</dbReference>
<dbReference type="Pfam" id="PF15937">
    <property type="entry name" value="PrlF_antitoxin"/>
    <property type="match status" value="1"/>
</dbReference>
<dbReference type="SUPFAM" id="SSF89447">
    <property type="entry name" value="AbrB/MazE/MraZ-like"/>
    <property type="match status" value="1"/>
</dbReference>
<dbReference type="PROSITE" id="PS51740">
    <property type="entry name" value="SPOVT_ABRB"/>
    <property type="match status" value="1"/>
</dbReference>